<feature type="chain" id="PRO_0000139278" description="Nickel-responsive regulator">
    <location>
        <begin position="1"/>
        <end position="133"/>
    </location>
</feature>
<feature type="binding site" evidence="1">
    <location>
        <position position="76"/>
    </location>
    <ligand>
        <name>Ni(2+)</name>
        <dbReference type="ChEBI" id="CHEBI:49786"/>
    </ligand>
</feature>
<feature type="binding site" evidence="1">
    <location>
        <position position="87"/>
    </location>
    <ligand>
        <name>Ni(2+)</name>
        <dbReference type="ChEBI" id="CHEBI:49786"/>
    </ligand>
</feature>
<feature type="binding site" evidence="1">
    <location>
        <position position="89"/>
    </location>
    <ligand>
        <name>Ni(2+)</name>
        <dbReference type="ChEBI" id="CHEBI:49786"/>
    </ligand>
</feature>
<feature type="binding site" evidence="1">
    <location>
        <position position="95"/>
    </location>
    <ligand>
        <name>Ni(2+)</name>
        <dbReference type="ChEBI" id="CHEBI:49786"/>
    </ligand>
</feature>
<proteinExistence type="inferred from homology"/>
<evidence type="ECO:0000255" key="1">
    <source>
        <dbReference type="HAMAP-Rule" id="MF_00476"/>
    </source>
</evidence>
<accession>Q5PJN1</accession>
<dbReference type="EMBL" id="CP000026">
    <property type="protein sequence ID" value="AAV79246.1"/>
    <property type="molecule type" value="Genomic_DNA"/>
</dbReference>
<dbReference type="RefSeq" id="WP_011233197.1">
    <property type="nucleotide sequence ID" value="NC_006511.1"/>
</dbReference>
<dbReference type="SMR" id="Q5PJN1"/>
<dbReference type="KEGG" id="spt:SPA3435"/>
<dbReference type="HOGENOM" id="CLU_113319_1_4_6"/>
<dbReference type="Proteomes" id="UP000008185">
    <property type="component" value="Chromosome"/>
</dbReference>
<dbReference type="GO" id="GO:0003700">
    <property type="term" value="F:DNA-binding transcription factor activity"/>
    <property type="evidence" value="ECO:0007669"/>
    <property type="project" value="UniProtKB-UniRule"/>
</dbReference>
<dbReference type="GO" id="GO:0016151">
    <property type="term" value="F:nickel cation binding"/>
    <property type="evidence" value="ECO:0007669"/>
    <property type="project" value="UniProtKB-UniRule"/>
</dbReference>
<dbReference type="GO" id="GO:0043565">
    <property type="term" value="F:sequence-specific DNA binding"/>
    <property type="evidence" value="ECO:0007669"/>
    <property type="project" value="UniProtKB-ARBA"/>
</dbReference>
<dbReference type="GO" id="GO:0010045">
    <property type="term" value="P:response to nickel cation"/>
    <property type="evidence" value="ECO:0007669"/>
    <property type="project" value="InterPro"/>
</dbReference>
<dbReference type="CDD" id="cd22231">
    <property type="entry name" value="RHH_NikR_HicB-like"/>
    <property type="match status" value="1"/>
</dbReference>
<dbReference type="FunFam" id="1.10.1220.10:FF:000001">
    <property type="entry name" value="Nickel-responsive regulator"/>
    <property type="match status" value="1"/>
</dbReference>
<dbReference type="FunFam" id="3.30.70.1150:FF:000002">
    <property type="entry name" value="Nickel-responsive regulator"/>
    <property type="match status" value="1"/>
</dbReference>
<dbReference type="Gene3D" id="3.30.70.1150">
    <property type="entry name" value="ACT-like. Chain A, domain 2"/>
    <property type="match status" value="1"/>
</dbReference>
<dbReference type="Gene3D" id="1.10.1220.10">
    <property type="entry name" value="Met repressor-like"/>
    <property type="match status" value="1"/>
</dbReference>
<dbReference type="HAMAP" id="MF_00476">
    <property type="entry name" value="NikR"/>
    <property type="match status" value="1"/>
</dbReference>
<dbReference type="InterPro" id="IPR027271">
    <property type="entry name" value="Acetolactate_synth/TF_NikR_C"/>
</dbReference>
<dbReference type="InterPro" id="IPR045865">
    <property type="entry name" value="ACT-like_dom_sf"/>
</dbReference>
<dbReference type="InterPro" id="IPR013321">
    <property type="entry name" value="Arc_rbn_hlx_hlx"/>
</dbReference>
<dbReference type="InterPro" id="IPR002145">
    <property type="entry name" value="CopG"/>
</dbReference>
<dbReference type="InterPro" id="IPR050192">
    <property type="entry name" value="CopG/NikR_regulator"/>
</dbReference>
<dbReference type="InterPro" id="IPR022988">
    <property type="entry name" value="Ni_resp_reg_NikR"/>
</dbReference>
<dbReference type="InterPro" id="IPR014160">
    <property type="entry name" value="Nickel_NikR_proteobac"/>
</dbReference>
<dbReference type="InterPro" id="IPR010985">
    <property type="entry name" value="Ribbon_hlx_hlx"/>
</dbReference>
<dbReference type="InterPro" id="IPR014864">
    <property type="entry name" value="TF_NikR_Ni-bd_C"/>
</dbReference>
<dbReference type="NCBIfam" id="TIGR02793">
    <property type="entry name" value="nikR"/>
    <property type="match status" value="1"/>
</dbReference>
<dbReference type="NCBIfam" id="NF002815">
    <property type="entry name" value="PRK02967.1"/>
    <property type="match status" value="1"/>
</dbReference>
<dbReference type="NCBIfam" id="NF003381">
    <property type="entry name" value="PRK04460.1"/>
    <property type="match status" value="1"/>
</dbReference>
<dbReference type="PANTHER" id="PTHR34719">
    <property type="entry name" value="NICKEL-RESPONSIVE REGULATOR"/>
    <property type="match status" value="1"/>
</dbReference>
<dbReference type="PANTHER" id="PTHR34719:SF2">
    <property type="entry name" value="NICKEL-RESPONSIVE REGULATOR"/>
    <property type="match status" value="1"/>
</dbReference>
<dbReference type="Pfam" id="PF08753">
    <property type="entry name" value="NikR_C"/>
    <property type="match status" value="1"/>
</dbReference>
<dbReference type="Pfam" id="PF01402">
    <property type="entry name" value="RHH_1"/>
    <property type="match status" value="1"/>
</dbReference>
<dbReference type="SUPFAM" id="SSF55021">
    <property type="entry name" value="ACT-like"/>
    <property type="match status" value="1"/>
</dbReference>
<dbReference type="SUPFAM" id="SSF47598">
    <property type="entry name" value="Ribbon-helix-helix"/>
    <property type="match status" value="1"/>
</dbReference>
<gene>
    <name evidence="1" type="primary">nikR</name>
    <name type="ordered locus">SPA3435</name>
</gene>
<organism>
    <name type="scientific">Salmonella paratyphi A (strain ATCC 9150 / SARB42)</name>
    <dbReference type="NCBI Taxonomy" id="295319"/>
    <lineage>
        <taxon>Bacteria</taxon>
        <taxon>Pseudomonadati</taxon>
        <taxon>Pseudomonadota</taxon>
        <taxon>Gammaproteobacteria</taxon>
        <taxon>Enterobacterales</taxon>
        <taxon>Enterobacteriaceae</taxon>
        <taxon>Salmonella</taxon>
    </lineage>
</organism>
<reference key="1">
    <citation type="journal article" date="2004" name="Nat. Genet.">
        <title>Comparison of genome degradation in Paratyphi A and Typhi, human-restricted serovars of Salmonella enterica that cause typhoid.</title>
        <authorList>
            <person name="McClelland M."/>
            <person name="Sanderson K.E."/>
            <person name="Clifton S.W."/>
            <person name="Latreille P."/>
            <person name="Porwollik S."/>
            <person name="Sabo A."/>
            <person name="Meyer R."/>
            <person name="Bieri T."/>
            <person name="Ozersky P."/>
            <person name="McLellan M."/>
            <person name="Harkins C.R."/>
            <person name="Wang C."/>
            <person name="Nguyen C."/>
            <person name="Berghoff A."/>
            <person name="Elliott G."/>
            <person name="Kohlberg S."/>
            <person name="Strong C."/>
            <person name="Du F."/>
            <person name="Carter J."/>
            <person name="Kremizki C."/>
            <person name="Layman D."/>
            <person name="Leonard S."/>
            <person name="Sun H."/>
            <person name="Fulton L."/>
            <person name="Nash W."/>
            <person name="Miner T."/>
            <person name="Minx P."/>
            <person name="Delehaunty K."/>
            <person name="Fronick C."/>
            <person name="Magrini V."/>
            <person name="Nhan M."/>
            <person name="Warren W."/>
            <person name="Florea L."/>
            <person name="Spieth J."/>
            <person name="Wilson R.K."/>
        </authorList>
    </citation>
    <scope>NUCLEOTIDE SEQUENCE [LARGE SCALE GENOMIC DNA]</scope>
    <source>
        <strain>ATCC 9150 / SARB42</strain>
    </source>
</reference>
<comment type="function">
    <text evidence="1">Transcriptional repressor of the nikABCDE operon. Is active in the presence of excessive concentrations of intracellular nickel.</text>
</comment>
<comment type="cofactor">
    <cofactor evidence="1">
        <name>Ni(2+)</name>
        <dbReference type="ChEBI" id="CHEBI:49786"/>
    </cofactor>
    <text evidence="1">Binds 1 nickel ion per subunit.</text>
</comment>
<comment type="subunit">
    <text evidence="1">Homotetramer.</text>
</comment>
<comment type="similarity">
    <text evidence="1">Belongs to the transcriptional regulatory CopG/NikR family.</text>
</comment>
<protein>
    <recommendedName>
        <fullName evidence="1">Nickel-responsive regulator</fullName>
    </recommendedName>
</protein>
<sequence length="133" mass="15092">MQRVTITLDDDLLETLDNLSQRRGYNNRSEAIRDILRGALAQEATQEHGTQGFAVLSYVYEHEKRDLASRIVSTQHHHHDLSVATLHVHINHDDCLEIAVLKGDMGDVQHFADDVIAQRGVRHGHLQCLPKED</sequence>
<keyword id="KW-0238">DNA-binding</keyword>
<keyword id="KW-0479">Metal-binding</keyword>
<keyword id="KW-0533">Nickel</keyword>
<keyword id="KW-0678">Repressor</keyword>
<keyword id="KW-0804">Transcription</keyword>
<keyword id="KW-0805">Transcription regulation</keyword>
<name>NIKR_SALPA</name>